<evidence type="ECO:0000255" key="1">
    <source>
        <dbReference type="HAMAP-Rule" id="MF_00316"/>
    </source>
</evidence>
<feature type="chain" id="PRO_0000134880" description="Probable molybdenum cofactor guanylyltransferase">
    <location>
        <begin position="1"/>
        <end position="198"/>
    </location>
</feature>
<feature type="binding site" evidence="1">
    <location>
        <begin position="11"/>
        <end position="13"/>
    </location>
    <ligand>
        <name>GTP</name>
        <dbReference type="ChEBI" id="CHEBI:37565"/>
    </ligand>
</feature>
<feature type="binding site" evidence="1">
    <location>
        <position position="23"/>
    </location>
    <ligand>
        <name>GTP</name>
        <dbReference type="ChEBI" id="CHEBI:37565"/>
    </ligand>
</feature>
<feature type="binding site" evidence="1">
    <location>
        <position position="71"/>
    </location>
    <ligand>
        <name>GTP</name>
        <dbReference type="ChEBI" id="CHEBI:37565"/>
    </ligand>
</feature>
<feature type="binding site" evidence="1">
    <location>
        <position position="102"/>
    </location>
    <ligand>
        <name>GTP</name>
        <dbReference type="ChEBI" id="CHEBI:37565"/>
    </ligand>
</feature>
<feature type="binding site" evidence="1">
    <location>
        <position position="102"/>
    </location>
    <ligand>
        <name>Mg(2+)</name>
        <dbReference type="ChEBI" id="CHEBI:18420"/>
    </ligand>
</feature>
<protein>
    <recommendedName>
        <fullName evidence="1">Probable molybdenum cofactor guanylyltransferase</fullName>
        <shortName evidence="1">MoCo guanylyltransferase</shortName>
        <ecNumber evidence="1">2.7.7.77</ecNumber>
    </recommendedName>
    <alternativeName>
        <fullName evidence="1">GTP:molybdopterin guanylyltransferase</fullName>
    </alternativeName>
    <alternativeName>
        <fullName evidence="1">Mo-MPT guanylyltransferase</fullName>
    </alternativeName>
    <alternativeName>
        <fullName evidence="1">Molybdopterin guanylyltransferase</fullName>
    </alternativeName>
    <alternativeName>
        <fullName evidence="1">Molybdopterin-guanine dinucleotide synthase</fullName>
        <shortName evidence="1">MGD synthase</shortName>
    </alternativeName>
</protein>
<reference key="1">
    <citation type="journal article" date="2000" name="Nucleic Acids Res.">
        <title>Complete genome sequence of the alkaliphilic bacterium Bacillus halodurans and genomic sequence comparison with Bacillus subtilis.</title>
        <authorList>
            <person name="Takami H."/>
            <person name="Nakasone K."/>
            <person name="Takaki Y."/>
            <person name="Maeno G."/>
            <person name="Sasaki R."/>
            <person name="Masui N."/>
            <person name="Fuji F."/>
            <person name="Hirama C."/>
            <person name="Nakamura Y."/>
            <person name="Ogasawara N."/>
            <person name="Kuhara S."/>
            <person name="Horikoshi K."/>
        </authorList>
    </citation>
    <scope>NUCLEOTIDE SEQUENCE [LARGE SCALE GENOMIC DNA]</scope>
    <source>
        <strain>ATCC BAA-125 / DSM 18197 / FERM 7344 / JCM 9153 / C-125</strain>
    </source>
</reference>
<accession>Q9K8I9</accession>
<dbReference type="EC" id="2.7.7.77" evidence="1"/>
<dbReference type="EMBL" id="BA000004">
    <property type="protein sequence ID" value="BAB06736.1"/>
    <property type="molecule type" value="Genomic_DNA"/>
</dbReference>
<dbReference type="PIR" id="A84027">
    <property type="entry name" value="A84027"/>
</dbReference>
<dbReference type="RefSeq" id="WP_010899161.1">
    <property type="nucleotide sequence ID" value="NC_002570.2"/>
</dbReference>
<dbReference type="SMR" id="Q9K8I9"/>
<dbReference type="STRING" id="272558.gene:10728927"/>
<dbReference type="KEGG" id="bha:BH3017"/>
<dbReference type="eggNOG" id="COG0746">
    <property type="taxonomic scope" value="Bacteria"/>
</dbReference>
<dbReference type="HOGENOM" id="CLU_055597_2_0_9"/>
<dbReference type="OrthoDB" id="9788394at2"/>
<dbReference type="Proteomes" id="UP000001258">
    <property type="component" value="Chromosome"/>
</dbReference>
<dbReference type="GO" id="GO:0005737">
    <property type="term" value="C:cytoplasm"/>
    <property type="evidence" value="ECO:0007669"/>
    <property type="project" value="UniProtKB-SubCell"/>
</dbReference>
<dbReference type="GO" id="GO:0005525">
    <property type="term" value="F:GTP binding"/>
    <property type="evidence" value="ECO:0007669"/>
    <property type="project" value="UniProtKB-UniRule"/>
</dbReference>
<dbReference type="GO" id="GO:0046872">
    <property type="term" value="F:metal ion binding"/>
    <property type="evidence" value="ECO:0007669"/>
    <property type="project" value="UniProtKB-KW"/>
</dbReference>
<dbReference type="GO" id="GO:0061603">
    <property type="term" value="F:molybdenum cofactor guanylyltransferase activity"/>
    <property type="evidence" value="ECO:0007669"/>
    <property type="project" value="UniProtKB-EC"/>
</dbReference>
<dbReference type="GO" id="GO:0006777">
    <property type="term" value="P:Mo-molybdopterin cofactor biosynthetic process"/>
    <property type="evidence" value="ECO:0007669"/>
    <property type="project" value="UniProtKB-KW"/>
</dbReference>
<dbReference type="CDD" id="cd02503">
    <property type="entry name" value="MobA"/>
    <property type="match status" value="1"/>
</dbReference>
<dbReference type="Gene3D" id="3.90.550.10">
    <property type="entry name" value="Spore Coat Polysaccharide Biosynthesis Protein SpsA, Chain A"/>
    <property type="match status" value="1"/>
</dbReference>
<dbReference type="HAMAP" id="MF_00316">
    <property type="entry name" value="MobA"/>
    <property type="match status" value="1"/>
</dbReference>
<dbReference type="InterPro" id="IPR025877">
    <property type="entry name" value="MobA-like_NTP_Trfase"/>
</dbReference>
<dbReference type="InterPro" id="IPR013482">
    <property type="entry name" value="Molybde_CF_guanTrfase"/>
</dbReference>
<dbReference type="InterPro" id="IPR029044">
    <property type="entry name" value="Nucleotide-diphossugar_trans"/>
</dbReference>
<dbReference type="PANTHER" id="PTHR19136">
    <property type="entry name" value="MOLYBDENUM COFACTOR GUANYLYLTRANSFERASE"/>
    <property type="match status" value="1"/>
</dbReference>
<dbReference type="PANTHER" id="PTHR19136:SF81">
    <property type="entry name" value="MOLYBDENUM COFACTOR GUANYLYLTRANSFERASE"/>
    <property type="match status" value="1"/>
</dbReference>
<dbReference type="Pfam" id="PF12804">
    <property type="entry name" value="NTP_transf_3"/>
    <property type="match status" value="1"/>
</dbReference>
<dbReference type="SUPFAM" id="SSF53448">
    <property type="entry name" value="Nucleotide-diphospho-sugar transferases"/>
    <property type="match status" value="1"/>
</dbReference>
<proteinExistence type="inferred from homology"/>
<organism>
    <name type="scientific">Halalkalibacterium halodurans (strain ATCC BAA-125 / DSM 18197 / FERM 7344 / JCM 9153 / C-125)</name>
    <name type="common">Bacillus halodurans</name>
    <dbReference type="NCBI Taxonomy" id="272558"/>
    <lineage>
        <taxon>Bacteria</taxon>
        <taxon>Bacillati</taxon>
        <taxon>Bacillota</taxon>
        <taxon>Bacilli</taxon>
        <taxon>Bacillales</taxon>
        <taxon>Bacillaceae</taxon>
        <taxon>Halalkalibacterium (ex Joshi et al. 2022)</taxon>
    </lineage>
</organism>
<keyword id="KW-0963">Cytoplasm</keyword>
<keyword id="KW-0342">GTP-binding</keyword>
<keyword id="KW-0460">Magnesium</keyword>
<keyword id="KW-0479">Metal-binding</keyword>
<keyword id="KW-0501">Molybdenum cofactor biosynthesis</keyword>
<keyword id="KW-0547">Nucleotide-binding</keyword>
<keyword id="KW-1185">Reference proteome</keyword>
<keyword id="KW-0808">Transferase</keyword>
<gene>
    <name evidence="1" type="primary">mobA</name>
    <name type="ordered locus">BH3017</name>
</gene>
<comment type="function">
    <text evidence="1">Transfers a GMP moiety from GTP to Mo-molybdopterin (Mo-MPT) cofactor (Moco or molybdenum cofactor) to form Mo-molybdopterin guanine dinucleotide (Mo-MGD) cofactor.</text>
</comment>
<comment type="catalytic activity">
    <reaction evidence="1">
        <text>Mo-molybdopterin + GTP + H(+) = Mo-molybdopterin guanine dinucleotide + diphosphate</text>
        <dbReference type="Rhea" id="RHEA:34243"/>
        <dbReference type="ChEBI" id="CHEBI:15378"/>
        <dbReference type="ChEBI" id="CHEBI:33019"/>
        <dbReference type="ChEBI" id="CHEBI:37565"/>
        <dbReference type="ChEBI" id="CHEBI:71302"/>
        <dbReference type="ChEBI" id="CHEBI:71310"/>
        <dbReference type="EC" id="2.7.7.77"/>
    </reaction>
</comment>
<comment type="cofactor">
    <cofactor evidence="1">
        <name>Mg(2+)</name>
        <dbReference type="ChEBI" id="CHEBI:18420"/>
    </cofactor>
</comment>
<comment type="subcellular location">
    <subcellularLocation>
        <location evidence="1">Cytoplasm</location>
    </subcellularLocation>
</comment>
<comment type="domain">
    <text evidence="1">The N-terminal domain determines nucleotide recognition and specific binding, while the C-terminal domain determines the specific binding to the target protein.</text>
</comment>
<comment type="similarity">
    <text evidence="1">Belongs to the MobA family.</text>
</comment>
<sequence>MNHLDRIGVILAGGKSTRFGRPKAMVQYQERYFYEASLDALQHHTDQVLIISHPTLTNQFRRNEGIRVIEDDPRYQGCGPLAGIFTAIEKESAYWYLTAPCDTPFLKKEIYDILFSYLDQEPDKKAVIPVVNGRKQPLIGLYHRSCLAPIQSLLEQQRYKVGFLFQLVDTLFVEDKAFEQLHSSFVNINRPEDLSEWT</sequence>
<name>MOBA_HALH5</name>